<gene>
    <name evidence="1" type="primary">nrdR</name>
    <name type="ordered locus">DIP1424</name>
</gene>
<keyword id="KW-0067">ATP-binding</keyword>
<keyword id="KW-0238">DNA-binding</keyword>
<keyword id="KW-0479">Metal-binding</keyword>
<keyword id="KW-0547">Nucleotide-binding</keyword>
<keyword id="KW-1185">Reference proteome</keyword>
<keyword id="KW-0678">Repressor</keyword>
<keyword id="KW-0804">Transcription</keyword>
<keyword id="KW-0805">Transcription regulation</keyword>
<keyword id="KW-0862">Zinc</keyword>
<keyword id="KW-0863">Zinc-finger</keyword>
<feature type="chain" id="PRO_0000182288" description="Transcriptional repressor NrdR">
    <location>
        <begin position="1"/>
        <end position="151"/>
    </location>
</feature>
<feature type="domain" description="ATP-cone" evidence="1">
    <location>
        <begin position="46"/>
        <end position="136"/>
    </location>
</feature>
<feature type="zinc finger region" evidence="1">
    <location>
        <begin position="3"/>
        <end position="34"/>
    </location>
</feature>
<dbReference type="EMBL" id="BX248358">
    <property type="protein sequence ID" value="CAE49955.1"/>
    <property type="molecule type" value="Genomic_DNA"/>
</dbReference>
<dbReference type="RefSeq" id="WP_003851822.1">
    <property type="nucleotide sequence ID" value="NC_002935.2"/>
</dbReference>
<dbReference type="SMR" id="Q6NGS9"/>
<dbReference type="STRING" id="257309.DIP1424"/>
<dbReference type="GeneID" id="29421160"/>
<dbReference type="KEGG" id="cdi:DIP1424"/>
<dbReference type="HOGENOM" id="CLU_108412_1_0_11"/>
<dbReference type="Proteomes" id="UP000002198">
    <property type="component" value="Chromosome"/>
</dbReference>
<dbReference type="GO" id="GO:0005524">
    <property type="term" value="F:ATP binding"/>
    <property type="evidence" value="ECO:0007669"/>
    <property type="project" value="UniProtKB-KW"/>
</dbReference>
<dbReference type="GO" id="GO:0003677">
    <property type="term" value="F:DNA binding"/>
    <property type="evidence" value="ECO:0007669"/>
    <property type="project" value="UniProtKB-KW"/>
</dbReference>
<dbReference type="GO" id="GO:0008270">
    <property type="term" value="F:zinc ion binding"/>
    <property type="evidence" value="ECO:0007669"/>
    <property type="project" value="UniProtKB-UniRule"/>
</dbReference>
<dbReference type="GO" id="GO:0045892">
    <property type="term" value="P:negative regulation of DNA-templated transcription"/>
    <property type="evidence" value="ECO:0007669"/>
    <property type="project" value="UniProtKB-UniRule"/>
</dbReference>
<dbReference type="HAMAP" id="MF_00440">
    <property type="entry name" value="NrdR"/>
    <property type="match status" value="1"/>
</dbReference>
<dbReference type="InterPro" id="IPR005144">
    <property type="entry name" value="ATP-cone_dom"/>
</dbReference>
<dbReference type="InterPro" id="IPR055173">
    <property type="entry name" value="NrdR-like_N"/>
</dbReference>
<dbReference type="InterPro" id="IPR003796">
    <property type="entry name" value="RNR_NrdR-like"/>
</dbReference>
<dbReference type="NCBIfam" id="TIGR00244">
    <property type="entry name" value="transcriptional regulator NrdR"/>
    <property type="match status" value="1"/>
</dbReference>
<dbReference type="PANTHER" id="PTHR30455">
    <property type="entry name" value="TRANSCRIPTIONAL REPRESSOR NRDR"/>
    <property type="match status" value="1"/>
</dbReference>
<dbReference type="PANTHER" id="PTHR30455:SF2">
    <property type="entry name" value="TRANSCRIPTIONAL REPRESSOR NRDR"/>
    <property type="match status" value="1"/>
</dbReference>
<dbReference type="Pfam" id="PF03477">
    <property type="entry name" value="ATP-cone"/>
    <property type="match status" value="1"/>
</dbReference>
<dbReference type="Pfam" id="PF22811">
    <property type="entry name" value="Zn_ribbon_NrdR"/>
    <property type="match status" value="1"/>
</dbReference>
<dbReference type="PROSITE" id="PS51161">
    <property type="entry name" value="ATP_CONE"/>
    <property type="match status" value="1"/>
</dbReference>
<comment type="function">
    <text evidence="1">Negatively regulates transcription of bacterial ribonucleotide reductase nrd genes and operons by binding to NrdR-boxes.</text>
</comment>
<comment type="cofactor">
    <cofactor evidence="1">
        <name>Zn(2+)</name>
        <dbReference type="ChEBI" id="CHEBI:29105"/>
    </cofactor>
    <text evidence="1">Binds 1 zinc ion.</text>
</comment>
<comment type="similarity">
    <text evidence="1">Belongs to the NrdR family.</text>
</comment>
<reference key="1">
    <citation type="journal article" date="2003" name="Nucleic Acids Res.">
        <title>The complete genome sequence and analysis of Corynebacterium diphtheriae NCTC13129.</title>
        <authorList>
            <person name="Cerdeno-Tarraga A.-M."/>
            <person name="Efstratiou A."/>
            <person name="Dover L.G."/>
            <person name="Holden M.T.G."/>
            <person name="Pallen M.J."/>
            <person name="Bentley S.D."/>
            <person name="Besra G.S."/>
            <person name="Churcher C.M."/>
            <person name="James K.D."/>
            <person name="De Zoysa A."/>
            <person name="Chillingworth T."/>
            <person name="Cronin A."/>
            <person name="Dowd L."/>
            <person name="Feltwell T."/>
            <person name="Hamlin N."/>
            <person name="Holroyd S."/>
            <person name="Jagels K."/>
            <person name="Moule S."/>
            <person name="Quail M.A."/>
            <person name="Rabbinowitsch E."/>
            <person name="Rutherford K.M."/>
            <person name="Thomson N.R."/>
            <person name="Unwin L."/>
            <person name="Whitehead S."/>
            <person name="Barrell B.G."/>
            <person name="Parkhill J."/>
        </authorList>
    </citation>
    <scope>NUCLEOTIDE SEQUENCE [LARGE SCALE GENOMIC DNA]</scope>
    <source>
        <strain>ATCC 700971 / NCTC 13129 / Biotype gravis</strain>
    </source>
</reference>
<evidence type="ECO:0000255" key="1">
    <source>
        <dbReference type="HAMAP-Rule" id="MF_00440"/>
    </source>
</evidence>
<sequence>MYCPFCHNDQSRVIDSRVIDSGSAIRRRRECTQCKNRFTTVEKAQLLVVKRNGLTEPFSREKVIVGVRRACQGRDVSDDALKRLAQQVEERVRLHGSSQIHANEIGLAILEPLRELDEVAYLRFASVYKSFESADDFESEIRLMRRRDRSN</sequence>
<accession>Q6NGS9</accession>
<proteinExistence type="inferred from homology"/>
<organism>
    <name type="scientific">Corynebacterium diphtheriae (strain ATCC 700971 / NCTC 13129 / Biotype gravis)</name>
    <dbReference type="NCBI Taxonomy" id="257309"/>
    <lineage>
        <taxon>Bacteria</taxon>
        <taxon>Bacillati</taxon>
        <taxon>Actinomycetota</taxon>
        <taxon>Actinomycetes</taxon>
        <taxon>Mycobacteriales</taxon>
        <taxon>Corynebacteriaceae</taxon>
        <taxon>Corynebacterium</taxon>
    </lineage>
</organism>
<name>NRDR_CORDI</name>
<protein>
    <recommendedName>
        <fullName evidence="1">Transcriptional repressor NrdR</fullName>
    </recommendedName>
</protein>